<reference key="1">
    <citation type="journal article" date="1997" name="Plant J.">
        <title>Identification of new protein species among 33 different small GTP-binding proteins encoded by cDNAs from Lotus japonicus, and expression of corresponding mRNAs in developing root nodules.</title>
        <authorList>
            <person name="Borg S."/>
            <person name="Brandstrup B."/>
            <person name="Jensen T.J."/>
            <person name="Poulsen C."/>
        </authorList>
    </citation>
    <scope>NUCLEOTIDE SEQUENCE [MRNA]</scope>
    <source>
        <strain>cv. Gifu / B-129</strain>
        <tissue>Root nodule</tissue>
    </source>
</reference>
<name>RB11A_LOTJA</name>
<comment type="subcellular location">
    <subcellularLocation>
        <location evidence="4">Cell membrane</location>
        <topology evidence="4">Lipid-anchor</topology>
        <orientation evidence="4">Cytoplasmic side</orientation>
    </subcellularLocation>
</comment>
<comment type="similarity">
    <text evidence="4">Belongs to the small GTPase superfamily. Rab family.</text>
</comment>
<accession>Q40191</accession>
<evidence type="ECO:0000250" key="1"/>
<evidence type="ECO:0000250" key="2">
    <source>
        <dbReference type="UniProtKB" id="P62491"/>
    </source>
</evidence>
<evidence type="ECO:0000255" key="3"/>
<evidence type="ECO:0000305" key="4"/>
<organism>
    <name type="scientific">Lotus japonicus</name>
    <name type="common">Lotus corniculatus var. japonicus</name>
    <dbReference type="NCBI Taxonomy" id="34305"/>
    <lineage>
        <taxon>Eukaryota</taxon>
        <taxon>Viridiplantae</taxon>
        <taxon>Streptophyta</taxon>
        <taxon>Embryophyta</taxon>
        <taxon>Tracheophyta</taxon>
        <taxon>Spermatophyta</taxon>
        <taxon>Magnoliopsida</taxon>
        <taxon>eudicotyledons</taxon>
        <taxon>Gunneridae</taxon>
        <taxon>Pentapetalae</taxon>
        <taxon>rosids</taxon>
        <taxon>fabids</taxon>
        <taxon>Fabales</taxon>
        <taxon>Fabaceae</taxon>
        <taxon>Papilionoideae</taxon>
        <taxon>50 kb inversion clade</taxon>
        <taxon>NPAAA clade</taxon>
        <taxon>Hologalegina</taxon>
        <taxon>robinioid clade</taxon>
        <taxon>Loteae</taxon>
        <taxon>Lotus</taxon>
    </lineage>
</organism>
<proteinExistence type="evidence at transcript level"/>
<gene>
    <name type="primary">RAB11A</name>
</gene>
<dbReference type="EMBL" id="Z73949">
    <property type="protein sequence ID" value="CAA98177.1"/>
    <property type="molecule type" value="mRNA"/>
</dbReference>
<dbReference type="SMR" id="Q40191"/>
<dbReference type="OMA" id="TYECVER"/>
<dbReference type="OrthoDB" id="9989112at2759"/>
<dbReference type="GO" id="GO:0005886">
    <property type="term" value="C:plasma membrane"/>
    <property type="evidence" value="ECO:0007669"/>
    <property type="project" value="UniProtKB-SubCell"/>
</dbReference>
<dbReference type="GO" id="GO:0005525">
    <property type="term" value="F:GTP binding"/>
    <property type="evidence" value="ECO:0007669"/>
    <property type="project" value="UniProtKB-KW"/>
</dbReference>
<dbReference type="GO" id="GO:0003924">
    <property type="term" value="F:GTPase activity"/>
    <property type="evidence" value="ECO:0007669"/>
    <property type="project" value="InterPro"/>
</dbReference>
<dbReference type="CDD" id="cd01868">
    <property type="entry name" value="Rab11_like"/>
    <property type="match status" value="1"/>
</dbReference>
<dbReference type="FunFam" id="3.40.50.300:FF:000274">
    <property type="entry name" value="ras-related protein RABA5a"/>
    <property type="match status" value="1"/>
</dbReference>
<dbReference type="Gene3D" id="3.40.50.300">
    <property type="entry name" value="P-loop containing nucleotide triphosphate hydrolases"/>
    <property type="match status" value="1"/>
</dbReference>
<dbReference type="InterPro" id="IPR027417">
    <property type="entry name" value="P-loop_NTPase"/>
</dbReference>
<dbReference type="InterPro" id="IPR050209">
    <property type="entry name" value="Rab_GTPases_membrane_traffic"/>
</dbReference>
<dbReference type="InterPro" id="IPR005225">
    <property type="entry name" value="Small_GTP-bd"/>
</dbReference>
<dbReference type="InterPro" id="IPR001806">
    <property type="entry name" value="Small_GTPase"/>
</dbReference>
<dbReference type="NCBIfam" id="TIGR00231">
    <property type="entry name" value="small_GTP"/>
    <property type="match status" value="1"/>
</dbReference>
<dbReference type="PANTHER" id="PTHR47979">
    <property type="entry name" value="DRAB11-RELATED"/>
    <property type="match status" value="1"/>
</dbReference>
<dbReference type="Pfam" id="PF00071">
    <property type="entry name" value="Ras"/>
    <property type="match status" value="1"/>
</dbReference>
<dbReference type="PRINTS" id="PR00449">
    <property type="entry name" value="RASTRNSFRMNG"/>
</dbReference>
<dbReference type="SMART" id="SM00177">
    <property type="entry name" value="ARF"/>
    <property type="match status" value="1"/>
</dbReference>
<dbReference type="SMART" id="SM00175">
    <property type="entry name" value="RAB"/>
    <property type="match status" value="1"/>
</dbReference>
<dbReference type="SMART" id="SM00176">
    <property type="entry name" value="RAN"/>
    <property type="match status" value="1"/>
</dbReference>
<dbReference type="SMART" id="SM00173">
    <property type="entry name" value="RAS"/>
    <property type="match status" value="1"/>
</dbReference>
<dbReference type="SMART" id="SM00174">
    <property type="entry name" value="RHO"/>
    <property type="match status" value="1"/>
</dbReference>
<dbReference type="SUPFAM" id="SSF52540">
    <property type="entry name" value="P-loop containing nucleoside triphosphate hydrolases"/>
    <property type="match status" value="1"/>
</dbReference>
<dbReference type="PROSITE" id="PS51419">
    <property type="entry name" value="RAB"/>
    <property type="match status" value="1"/>
</dbReference>
<feature type="chain" id="PRO_0000121168" description="Ras-related protein Rab11A">
    <location>
        <begin position="1"/>
        <end position="223"/>
    </location>
</feature>
<feature type="propeptide" id="PRO_0000370819" description="Removed in mature form" evidence="3">
    <location>
        <begin position="224"/>
        <end position="226"/>
    </location>
</feature>
<feature type="short sequence motif" description="Effector region" evidence="1">
    <location>
        <begin position="46"/>
        <end position="54"/>
    </location>
</feature>
<feature type="binding site" evidence="2">
    <location>
        <begin position="24"/>
        <end position="32"/>
    </location>
    <ligand>
        <name>GTP</name>
        <dbReference type="ChEBI" id="CHEBI:37565"/>
    </ligand>
</feature>
<feature type="binding site" evidence="2">
    <location>
        <begin position="43"/>
        <end position="49"/>
    </location>
    <ligand>
        <name>GTP</name>
        <dbReference type="ChEBI" id="CHEBI:37565"/>
    </ligand>
</feature>
<feature type="binding site" evidence="2">
    <location>
        <begin position="72"/>
        <end position="76"/>
    </location>
    <ligand>
        <name>GTP</name>
        <dbReference type="ChEBI" id="CHEBI:37565"/>
    </ligand>
</feature>
<feature type="binding site" evidence="2">
    <location>
        <begin position="130"/>
        <end position="133"/>
    </location>
    <ligand>
        <name>GTP</name>
        <dbReference type="ChEBI" id="CHEBI:37565"/>
    </ligand>
</feature>
<feature type="binding site" evidence="2">
    <location>
        <begin position="160"/>
        <end position="162"/>
    </location>
    <ligand>
        <name>GTP</name>
        <dbReference type="ChEBI" id="CHEBI:37565"/>
    </ligand>
</feature>
<feature type="modified residue" description="Cysteine methyl ester" evidence="3">
    <location>
        <position position="223"/>
    </location>
</feature>
<feature type="lipid moiety-binding region" description="S-geranylgeranyl cysteine" evidence="1">
    <location>
        <position position="222"/>
    </location>
</feature>
<feature type="lipid moiety-binding region" description="S-geranylgeranyl cysteine" evidence="1">
    <location>
        <position position="223"/>
    </location>
</feature>
<keyword id="KW-1003">Cell membrane</keyword>
<keyword id="KW-0342">GTP-binding</keyword>
<keyword id="KW-0449">Lipoprotein</keyword>
<keyword id="KW-0472">Membrane</keyword>
<keyword id="KW-0488">Methylation</keyword>
<keyword id="KW-0547">Nucleotide-binding</keyword>
<keyword id="KW-0636">Prenylation</keyword>
<protein>
    <recommendedName>
        <fullName>Ras-related protein Rab11A</fullName>
    </recommendedName>
</protein>
<sequence length="226" mass="24842">MASGGGYGDANAKIDYVFKVVLIGDSAVGKSQILARFARNEFSLDSKSTIGVEFQTRTLVIDHKTVKAQIWDTAGQERYRAVTSAYYRGAVGAMLVYDITKRQTFDHIPRWLEELRNHADKNIVIILIGNKCDLVNQRDVPTEDAKEFAEKEGLFFLETSALEATNVESAFTTVLTEIYNIVNKKSLAADESQGNGNSASLSGQKIIIPGPAQEIPAKRNMCCQAS</sequence>